<sequence length="170" mass="19567">MAQIRIHEVNTRIENEVEVSKFLQEEGVLYEKWNISKLPTHLNENYSLTDENKAEILAIFSKEIADVSARRGYKAHDVISLSSSTPNLDELLINFQKEHHHTDDEVRFIVSGHGIFAIEGKDGKFFDVELEPGDLISVPENARHYFTLQDDRQVVAIRIFVTTEGWVPIY</sequence>
<comment type="function">
    <text evidence="1">Catalyzes 2 different reactions between oxygen and the acireductone 1,2-dihydroxy-3-keto-5-methylthiopentene (DHK-MTPene) depending upon the metal bound in the active site. Fe-containing acireductone dioxygenase (Fe-ARD) produces formate and 2-keto-4-methylthiobutyrate (KMTB), the alpha-ketoacid precursor of methionine in the methionine recycle pathway. Ni-containing acireductone dioxygenase (Ni-ARD) produces methylthiopropionate, carbon monoxide and formate, and does not lie on the methionine recycle pathway.</text>
</comment>
<comment type="catalytic activity">
    <reaction evidence="1">
        <text>1,2-dihydroxy-5-(methylsulfanyl)pent-1-en-3-one + O2 = 3-(methylsulfanyl)propanoate + CO + formate + 2 H(+)</text>
        <dbReference type="Rhea" id="RHEA:14161"/>
        <dbReference type="ChEBI" id="CHEBI:15378"/>
        <dbReference type="ChEBI" id="CHEBI:15379"/>
        <dbReference type="ChEBI" id="CHEBI:15740"/>
        <dbReference type="ChEBI" id="CHEBI:17245"/>
        <dbReference type="ChEBI" id="CHEBI:49016"/>
        <dbReference type="ChEBI" id="CHEBI:49252"/>
        <dbReference type="EC" id="1.13.11.53"/>
    </reaction>
</comment>
<comment type="catalytic activity">
    <reaction evidence="1">
        <text>1,2-dihydroxy-5-(methylsulfanyl)pent-1-en-3-one + O2 = 4-methylsulfanyl-2-oxobutanoate + formate + 2 H(+)</text>
        <dbReference type="Rhea" id="RHEA:24504"/>
        <dbReference type="ChEBI" id="CHEBI:15378"/>
        <dbReference type="ChEBI" id="CHEBI:15379"/>
        <dbReference type="ChEBI" id="CHEBI:15740"/>
        <dbReference type="ChEBI" id="CHEBI:16723"/>
        <dbReference type="ChEBI" id="CHEBI:49252"/>
        <dbReference type="EC" id="1.13.11.54"/>
    </reaction>
</comment>
<comment type="cofactor">
    <cofactor evidence="1">
        <name>Fe(2+)</name>
        <dbReference type="ChEBI" id="CHEBI:29033"/>
    </cofactor>
    <text evidence="1">Binds 1 Fe(2+) cation per monomer.</text>
</comment>
<comment type="cofactor">
    <cofactor evidence="1">
        <name>Ni(2+)</name>
        <dbReference type="ChEBI" id="CHEBI:49786"/>
    </cofactor>
    <text evidence="1">Binds 1 nickel ion per monomer.</text>
</comment>
<comment type="pathway">
    <text evidence="1">Amino-acid biosynthesis; L-methionine biosynthesis via salvage pathway; L-methionine from S-methyl-5-thio-alpha-D-ribose 1-phosphate: step 5/6.</text>
</comment>
<comment type="subunit">
    <text evidence="1">Monomer.</text>
</comment>
<comment type="similarity">
    <text evidence="1">Belongs to the acireductone dioxygenase (ARD) family.</text>
</comment>
<gene>
    <name evidence="1" type="primary">mtnD</name>
    <name type="ordered locus">BC_4039</name>
</gene>
<protein>
    <recommendedName>
        <fullName evidence="1">Acireductone dioxygenase</fullName>
    </recommendedName>
    <alternativeName>
        <fullName evidence="1">1,2-dihydroxy-3-keto-5-methylthiopentene dioxygenase</fullName>
        <shortName evidence="1">DHK-MTPene dioxygenase</shortName>
    </alternativeName>
    <alternativeName>
        <fullName evidence="1">Acireductone dioxygenase (Fe(2+)-requiring)</fullName>
        <shortName evidence="1">ARD'</shortName>
        <shortName evidence="1">Fe-ARD</shortName>
        <ecNumber evidence="1">1.13.11.54</ecNumber>
    </alternativeName>
    <alternativeName>
        <fullName evidence="1">Acireductone dioxygenase (Ni(2+)-requiring)</fullName>
        <shortName evidence="1">ARD</shortName>
        <shortName evidence="1">Ni-ARD</shortName>
        <ecNumber evidence="1">1.13.11.53</ecNumber>
    </alternativeName>
</protein>
<accession>Q819E5</accession>
<proteinExistence type="inferred from homology"/>
<organism>
    <name type="scientific">Bacillus cereus (strain ATCC 14579 / DSM 31 / CCUG 7414 / JCM 2152 / NBRC 15305 / NCIMB 9373 / NCTC 2599 / NRRL B-3711)</name>
    <dbReference type="NCBI Taxonomy" id="226900"/>
    <lineage>
        <taxon>Bacteria</taxon>
        <taxon>Bacillati</taxon>
        <taxon>Bacillota</taxon>
        <taxon>Bacilli</taxon>
        <taxon>Bacillales</taxon>
        <taxon>Bacillaceae</taxon>
        <taxon>Bacillus</taxon>
        <taxon>Bacillus cereus group</taxon>
    </lineage>
</organism>
<reference key="1">
    <citation type="journal article" date="2003" name="Nature">
        <title>Genome sequence of Bacillus cereus and comparative analysis with Bacillus anthracis.</title>
        <authorList>
            <person name="Ivanova N."/>
            <person name="Sorokin A."/>
            <person name="Anderson I."/>
            <person name="Galleron N."/>
            <person name="Candelon B."/>
            <person name="Kapatral V."/>
            <person name="Bhattacharyya A."/>
            <person name="Reznik G."/>
            <person name="Mikhailova N."/>
            <person name="Lapidus A."/>
            <person name="Chu L."/>
            <person name="Mazur M."/>
            <person name="Goltsman E."/>
            <person name="Larsen N."/>
            <person name="D'Souza M."/>
            <person name="Walunas T."/>
            <person name="Grechkin Y."/>
            <person name="Pusch G."/>
            <person name="Haselkorn R."/>
            <person name="Fonstein M."/>
            <person name="Ehrlich S.D."/>
            <person name="Overbeek R."/>
            <person name="Kyrpides N.C."/>
        </authorList>
    </citation>
    <scope>NUCLEOTIDE SEQUENCE [LARGE SCALE GENOMIC DNA]</scope>
    <source>
        <strain>ATCC 14579 / DSM 31 / CCUG 7414 / JCM 2152 / NBRC 15305 / NCIMB 9373 / NCTC 2599 / NRRL B-3711</strain>
    </source>
</reference>
<dbReference type="EC" id="1.13.11.54" evidence="1"/>
<dbReference type="EC" id="1.13.11.53" evidence="1"/>
<dbReference type="EMBL" id="AE016877">
    <property type="protein sequence ID" value="AAP10958.1"/>
    <property type="molecule type" value="Genomic_DNA"/>
</dbReference>
<dbReference type="RefSeq" id="NP_833757.1">
    <property type="nucleotide sequence ID" value="NC_004722.1"/>
</dbReference>
<dbReference type="RefSeq" id="WP_000057314.1">
    <property type="nucleotide sequence ID" value="NZ_CP138336.1"/>
</dbReference>
<dbReference type="SMR" id="Q819E5"/>
<dbReference type="STRING" id="226900.BC_4039"/>
<dbReference type="KEGG" id="bce:BC4039"/>
<dbReference type="PATRIC" id="fig|226900.8.peg.4170"/>
<dbReference type="HOGENOM" id="CLU_125400_0_0_9"/>
<dbReference type="OrthoDB" id="9795636at2"/>
<dbReference type="UniPathway" id="UPA00904">
    <property type="reaction ID" value="UER00878"/>
</dbReference>
<dbReference type="Proteomes" id="UP000001417">
    <property type="component" value="Chromosome"/>
</dbReference>
<dbReference type="GO" id="GO:0010308">
    <property type="term" value="F:acireductone dioxygenase (Ni2+-requiring) activity"/>
    <property type="evidence" value="ECO:0007669"/>
    <property type="project" value="UniProtKB-UniRule"/>
</dbReference>
<dbReference type="GO" id="GO:0010309">
    <property type="term" value="F:acireductone dioxygenase [iron(II)-requiring] activity"/>
    <property type="evidence" value="ECO:0000318"/>
    <property type="project" value="GO_Central"/>
</dbReference>
<dbReference type="GO" id="GO:0005506">
    <property type="term" value="F:iron ion binding"/>
    <property type="evidence" value="ECO:0007669"/>
    <property type="project" value="UniProtKB-UniRule"/>
</dbReference>
<dbReference type="GO" id="GO:0016151">
    <property type="term" value="F:nickel cation binding"/>
    <property type="evidence" value="ECO:0007669"/>
    <property type="project" value="UniProtKB-UniRule"/>
</dbReference>
<dbReference type="GO" id="GO:0019509">
    <property type="term" value="P:L-methionine salvage from methylthioadenosine"/>
    <property type="evidence" value="ECO:0007669"/>
    <property type="project" value="UniProtKB-UniRule"/>
</dbReference>
<dbReference type="GO" id="GO:0019284">
    <property type="term" value="P:L-methionine salvage from S-adenosylmethionine"/>
    <property type="evidence" value="ECO:0007669"/>
    <property type="project" value="InterPro"/>
</dbReference>
<dbReference type="GO" id="GO:0006555">
    <property type="term" value="P:methionine metabolic process"/>
    <property type="evidence" value="ECO:0000318"/>
    <property type="project" value="GO_Central"/>
</dbReference>
<dbReference type="CDD" id="cd02232">
    <property type="entry name" value="cupin_ARD"/>
    <property type="match status" value="1"/>
</dbReference>
<dbReference type="FunFam" id="2.60.120.10:FF:000056">
    <property type="entry name" value="Acireductone dioxygenase"/>
    <property type="match status" value="1"/>
</dbReference>
<dbReference type="Gene3D" id="2.60.120.10">
    <property type="entry name" value="Jelly Rolls"/>
    <property type="match status" value="1"/>
</dbReference>
<dbReference type="HAMAP" id="MF_01682">
    <property type="entry name" value="Salvage_MtnD"/>
    <property type="match status" value="1"/>
</dbReference>
<dbReference type="InterPro" id="IPR004313">
    <property type="entry name" value="ARD"/>
</dbReference>
<dbReference type="InterPro" id="IPR023956">
    <property type="entry name" value="ARD_bac"/>
</dbReference>
<dbReference type="InterPro" id="IPR014710">
    <property type="entry name" value="RmlC-like_jellyroll"/>
</dbReference>
<dbReference type="InterPro" id="IPR011051">
    <property type="entry name" value="RmlC_Cupin_sf"/>
</dbReference>
<dbReference type="PANTHER" id="PTHR23418">
    <property type="entry name" value="ACIREDUCTONE DIOXYGENASE"/>
    <property type="match status" value="1"/>
</dbReference>
<dbReference type="PANTHER" id="PTHR23418:SF0">
    <property type="entry name" value="ACIREDUCTONE DIOXYGENASE"/>
    <property type="match status" value="1"/>
</dbReference>
<dbReference type="Pfam" id="PF03079">
    <property type="entry name" value="ARD"/>
    <property type="match status" value="1"/>
</dbReference>
<dbReference type="SUPFAM" id="SSF51182">
    <property type="entry name" value="RmlC-like cupins"/>
    <property type="match status" value="1"/>
</dbReference>
<evidence type="ECO:0000255" key="1">
    <source>
        <dbReference type="HAMAP-Rule" id="MF_01682"/>
    </source>
</evidence>
<feature type="chain" id="PRO_0000162940" description="Acireductone dioxygenase">
    <location>
        <begin position="1"/>
        <end position="170"/>
    </location>
</feature>
<feature type="binding site" evidence="1">
    <location>
        <position position="99"/>
    </location>
    <ligand>
        <name>Fe(2+)</name>
        <dbReference type="ChEBI" id="CHEBI:29033"/>
    </ligand>
</feature>
<feature type="binding site" evidence="1">
    <location>
        <position position="99"/>
    </location>
    <ligand>
        <name>Ni(2+)</name>
        <dbReference type="ChEBI" id="CHEBI:49786"/>
    </ligand>
</feature>
<feature type="binding site" evidence="1">
    <location>
        <position position="101"/>
    </location>
    <ligand>
        <name>Fe(2+)</name>
        <dbReference type="ChEBI" id="CHEBI:29033"/>
    </ligand>
</feature>
<feature type="binding site" evidence="1">
    <location>
        <position position="101"/>
    </location>
    <ligand>
        <name>Ni(2+)</name>
        <dbReference type="ChEBI" id="CHEBI:49786"/>
    </ligand>
</feature>
<feature type="binding site" evidence="1">
    <location>
        <position position="105"/>
    </location>
    <ligand>
        <name>Fe(2+)</name>
        <dbReference type="ChEBI" id="CHEBI:29033"/>
    </ligand>
</feature>
<feature type="binding site" evidence="1">
    <location>
        <position position="105"/>
    </location>
    <ligand>
        <name>Ni(2+)</name>
        <dbReference type="ChEBI" id="CHEBI:49786"/>
    </ligand>
</feature>
<feature type="binding site" evidence="1">
    <location>
        <position position="144"/>
    </location>
    <ligand>
        <name>Fe(2+)</name>
        <dbReference type="ChEBI" id="CHEBI:29033"/>
    </ligand>
</feature>
<feature type="binding site" evidence="1">
    <location>
        <position position="144"/>
    </location>
    <ligand>
        <name>Ni(2+)</name>
        <dbReference type="ChEBI" id="CHEBI:49786"/>
    </ligand>
</feature>
<feature type="site" description="May play a role in metal incorporation in vivo" evidence="1">
    <location>
        <position position="98"/>
    </location>
</feature>
<feature type="site" description="May play a role in transmitting local conformational changes" evidence="1">
    <location>
        <position position="104"/>
    </location>
</feature>
<feature type="site" description="Important to generate the dianion" evidence="1">
    <location>
        <position position="107"/>
    </location>
</feature>
<keyword id="KW-0028">Amino-acid biosynthesis</keyword>
<keyword id="KW-0223">Dioxygenase</keyword>
<keyword id="KW-0408">Iron</keyword>
<keyword id="KW-0479">Metal-binding</keyword>
<keyword id="KW-0486">Methionine biosynthesis</keyword>
<keyword id="KW-0533">Nickel</keyword>
<keyword id="KW-0560">Oxidoreductase</keyword>
<keyword id="KW-1185">Reference proteome</keyword>
<name>MTND_BACCR</name>